<dbReference type="EMBL" id="AE016814">
    <property type="protein sequence ID" value="AAS50528.2"/>
    <property type="molecule type" value="Genomic_DNA"/>
</dbReference>
<dbReference type="RefSeq" id="NP_982704.2">
    <property type="nucleotide sequence ID" value="NM_208057.2"/>
</dbReference>
<dbReference type="SMR" id="Q75ED7"/>
<dbReference type="FunCoup" id="Q75ED7">
    <property type="interactions" value="80"/>
</dbReference>
<dbReference type="STRING" id="284811.Q75ED7"/>
<dbReference type="EnsemblFungi" id="AAS50528">
    <property type="protein sequence ID" value="AAS50528"/>
    <property type="gene ID" value="AGOS_AAR161W"/>
</dbReference>
<dbReference type="GeneID" id="4618740"/>
<dbReference type="KEGG" id="ago:AGOS_AAR161W"/>
<dbReference type="eggNOG" id="ENOG502SB8M">
    <property type="taxonomic scope" value="Eukaryota"/>
</dbReference>
<dbReference type="HOGENOM" id="CLU_114619_0_0_1"/>
<dbReference type="InParanoid" id="Q75ED7"/>
<dbReference type="OMA" id="DTWIKIQ"/>
<dbReference type="OrthoDB" id="4067138at2759"/>
<dbReference type="Proteomes" id="UP000000591">
    <property type="component" value="Chromosome I"/>
</dbReference>
<dbReference type="GO" id="GO:0005737">
    <property type="term" value="C:cytoplasm"/>
    <property type="evidence" value="ECO:0007669"/>
    <property type="project" value="UniProtKB-KW"/>
</dbReference>
<dbReference type="GO" id="GO:0042729">
    <property type="term" value="C:DASH complex"/>
    <property type="evidence" value="ECO:0000250"/>
    <property type="project" value="UniProtKB"/>
</dbReference>
<dbReference type="GO" id="GO:0005874">
    <property type="term" value="C:microtubule"/>
    <property type="evidence" value="ECO:0007669"/>
    <property type="project" value="UniProtKB-KW"/>
</dbReference>
<dbReference type="GO" id="GO:0072686">
    <property type="term" value="C:mitotic spindle"/>
    <property type="evidence" value="ECO:0007669"/>
    <property type="project" value="InterPro"/>
</dbReference>
<dbReference type="GO" id="GO:0000922">
    <property type="term" value="C:spindle pole"/>
    <property type="evidence" value="ECO:0007669"/>
    <property type="project" value="UniProtKB-SubCell"/>
</dbReference>
<dbReference type="GO" id="GO:0008608">
    <property type="term" value="P:attachment of spindle microtubules to kinetochore"/>
    <property type="evidence" value="ECO:0000250"/>
    <property type="project" value="UniProtKB"/>
</dbReference>
<dbReference type="GO" id="GO:0051301">
    <property type="term" value="P:cell division"/>
    <property type="evidence" value="ECO:0007669"/>
    <property type="project" value="UniProtKB-KW"/>
</dbReference>
<dbReference type="GO" id="GO:1990758">
    <property type="term" value="P:mitotic sister chromatid biorientation"/>
    <property type="evidence" value="ECO:0000250"/>
    <property type="project" value="UniProtKB"/>
</dbReference>
<dbReference type="GO" id="GO:1990976">
    <property type="term" value="P:protein transport along microtubule to mitotic spindle pole body"/>
    <property type="evidence" value="ECO:0000250"/>
    <property type="project" value="UniProtKB"/>
</dbReference>
<dbReference type="InterPro" id="IPR013960">
    <property type="entry name" value="DASH_Duo1"/>
</dbReference>
<dbReference type="PANTHER" id="PTHR28216">
    <property type="entry name" value="DASH COMPLEX SUBUNIT DUO1"/>
    <property type="match status" value="1"/>
</dbReference>
<dbReference type="PANTHER" id="PTHR28216:SF1">
    <property type="entry name" value="DASH COMPLEX SUBUNIT DUO1"/>
    <property type="match status" value="1"/>
</dbReference>
<dbReference type="Pfam" id="PF08651">
    <property type="entry name" value="DASH_Duo1"/>
    <property type="match status" value="1"/>
</dbReference>
<comment type="function">
    <text evidence="2">Component of the DASH complex that connects microtubules with kinetochores and couples microtubule depolymerisation to chromosome movement; it is involved in retrieving kinetochores to the spindle poles before their re-orientation on the spindle in early mitosis and allows microtubule depolymerization to pull chromosomes apart and resist detachment during anaphase. Kinetochores, consisting of a centromere-associated inner segment and a microtubule-contacting outer segment, play a crucial role in chromosome segregation by mediating the physical connection between centromeric DNA and microtubules. Kinetochores also serve as an input point for the spindle assembly checkpoint, which delays anaphase until all chromosomes have bioriented on the mitotic spindle.</text>
</comment>
<comment type="subunit">
    <text evidence="1 2">Component of the DASH complex consisting of ASK1, DAD1, DAD2, DAD3, DAD4, DAM1, DUO1, HSK3, SPC19 and SPC34, with a stoichiometry of one copy of each subunit per complex. Multiple DASH complexes oligomerize to form a ring that encircles spindle microtubules and organizes the rod-like NDC80 complexes of the outer kinetochore. DASH complex oligomerization strengthens microtubule attachments (By similarity). On cytoplasmic microtubules, DASH complexes appear to form patches instead of rings (By similarity). Within the complex, DAM1 and DUO1 may form the microtubule connections (By similarity).</text>
</comment>
<comment type="subcellular location">
    <subcellularLocation>
        <location evidence="2">Nucleus</location>
    </subcellularLocation>
    <subcellularLocation>
        <location evidence="2">Cytoplasm</location>
        <location evidence="2">Cytoskeleton</location>
        <location evidence="2">Spindle pole</location>
    </subcellularLocation>
    <subcellularLocation>
        <location evidence="2">Chromosome</location>
        <location evidence="2">Centromere</location>
        <location evidence="2">Kinetochore</location>
    </subcellularLocation>
</comment>
<comment type="similarity">
    <text evidence="5">Belongs to the DASH complex DUO1 family.</text>
</comment>
<organism>
    <name type="scientific">Eremothecium gossypii (strain ATCC 10895 / CBS 109.51 / FGSC 9923 / NRRL Y-1056)</name>
    <name type="common">Yeast</name>
    <name type="synonym">Ashbya gossypii</name>
    <dbReference type="NCBI Taxonomy" id="284811"/>
    <lineage>
        <taxon>Eukaryota</taxon>
        <taxon>Fungi</taxon>
        <taxon>Dikarya</taxon>
        <taxon>Ascomycota</taxon>
        <taxon>Saccharomycotina</taxon>
        <taxon>Saccharomycetes</taxon>
        <taxon>Saccharomycetales</taxon>
        <taxon>Saccharomycetaceae</taxon>
        <taxon>Eremothecium</taxon>
    </lineage>
</organism>
<accession>Q75ED7</accession>
<keyword id="KW-0131">Cell cycle</keyword>
<keyword id="KW-0132">Cell division</keyword>
<keyword id="KW-0137">Centromere</keyword>
<keyword id="KW-0158">Chromosome</keyword>
<keyword id="KW-0159">Chromosome partition</keyword>
<keyword id="KW-0175">Coiled coil</keyword>
<keyword id="KW-0963">Cytoplasm</keyword>
<keyword id="KW-0206">Cytoskeleton</keyword>
<keyword id="KW-0995">Kinetochore</keyword>
<keyword id="KW-0493">Microtubule</keyword>
<keyword id="KW-0498">Mitosis</keyword>
<keyword id="KW-0539">Nucleus</keyword>
<keyword id="KW-1185">Reference proteome</keyword>
<reference key="1">
    <citation type="journal article" date="2004" name="Science">
        <title>The Ashbya gossypii genome as a tool for mapping the ancient Saccharomyces cerevisiae genome.</title>
        <authorList>
            <person name="Dietrich F.S."/>
            <person name="Voegeli S."/>
            <person name="Brachat S."/>
            <person name="Lerch A."/>
            <person name="Gates K."/>
            <person name="Steiner S."/>
            <person name="Mohr C."/>
            <person name="Poehlmann R."/>
            <person name="Luedi P."/>
            <person name="Choi S."/>
            <person name="Wing R.A."/>
            <person name="Flavier A."/>
            <person name="Gaffney T.D."/>
            <person name="Philippsen P."/>
        </authorList>
    </citation>
    <scope>NUCLEOTIDE SEQUENCE [LARGE SCALE GENOMIC DNA]</scope>
    <source>
        <strain>ATCC 10895 / CBS 109.51 / FGSC 9923 / NRRL Y-1056</strain>
    </source>
</reference>
<reference key="2">
    <citation type="journal article" date="2013" name="G3 (Bethesda)">
        <title>Genomes of Ashbya fungi isolated from insects reveal four mating-type loci, numerous translocations, lack of transposons, and distinct gene duplications.</title>
        <authorList>
            <person name="Dietrich F.S."/>
            <person name="Voegeli S."/>
            <person name="Kuo S."/>
            <person name="Philippsen P."/>
        </authorList>
    </citation>
    <scope>GENOME REANNOTATION</scope>
    <source>
        <strain>ATCC 10895 / CBS 109.51 / FGSC 9923 / NRRL Y-1056</strain>
    </source>
</reference>
<protein>
    <recommendedName>
        <fullName>DASH complex subunit DUO1</fullName>
    </recommendedName>
    <alternativeName>
        <fullName>Outer kinetochore protein DUO1</fullName>
    </alternativeName>
</protein>
<proteinExistence type="inferred from homology"/>
<feature type="chain" id="PRO_0000215591" description="DASH complex subunit DUO1">
    <location>
        <begin position="1"/>
        <end position="194"/>
    </location>
</feature>
<feature type="region of interest" description="Disordered" evidence="4">
    <location>
        <begin position="151"/>
        <end position="194"/>
    </location>
</feature>
<feature type="coiled-coil region" evidence="3">
    <location>
        <begin position="127"/>
        <end position="156"/>
    </location>
</feature>
<evidence type="ECO:0000250" key="1">
    <source>
        <dbReference type="UniProtKB" id="O74372"/>
    </source>
</evidence>
<evidence type="ECO:0000250" key="2">
    <source>
        <dbReference type="UniProtKB" id="P53168"/>
    </source>
</evidence>
<evidence type="ECO:0000255" key="3"/>
<evidence type="ECO:0000256" key="4">
    <source>
        <dbReference type="SAM" id="MobiDB-lite"/>
    </source>
</evidence>
<evidence type="ECO:0000305" key="5"/>
<sequence>MNANGEANGGVDSAALDELIPQIFDQMRTNQLDGSGAAAWGTAAVSTATLLKEMEQLDQIIPVLQQLNESLRRSTGENLSRIRRTCEAVNRVLDTWIKIQSQAGYVGELMDDSEYLSYMEKTRGDEGQQQAYMESLRKQVEELRRKVDERRAVEAAAAAPRAPERTRGASGIPRGGSRITKRGGTTVRGRRMFR</sequence>
<gene>
    <name type="primary">DUO1</name>
    <name type="ordered locus">AAR161W</name>
</gene>
<name>DUO1_EREGS</name>